<dbReference type="EMBL" id="CP000563">
    <property type="protein sequence ID" value="ABN63841.1"/>
    <property type="molecule type" value="Genomic_DNA"/>
</dbReference>
<dbReference type="RefSeq" id="WP_006083830.1">
    <property type="nucleotide sequence ID" value="NC_009052.1"/>
</dbReference>
<dbReference type="SMR" id="A3DAS8"/>
<dbReference type="STRING" id="325240.Sbal_4380"/>
<dbReference type="KEGG" id="sbl:Sbal_4380"/>
<dbReference type="HOGENOM" id="CLU_016535_3_0_6"/>
<dbReference type="OrthoDB" id="9780552at2"/>
<dbReference type="Proteomes" id="UP000001557">
    <property type="component" value="Chromosome"/>
</dbReference>
<dbReference type="GO" id="GO:0005886">
    <property type="term" value="C:plasma membrane"/>
    <property type="evidence" value="ECO:0007669"/>
    <property type="project" value="UniProtKB-SubCell"/>
</dbReference>
<dbReference type="GO" id="GO:0032977">
    <property type="term" value="F:membrane insertase activity"/>
    <property type="evidence" value="ECO:0007669"/>
    <property type="project" value="InterPro"/>
</dbReference>
<dbReference type="GO" id="GO:0051205">
    <property type="term" value="P:protein insertion into membrane"/>
    <property type="evidence" value="ECO:0007669"/>
    <property type="project" value="TreeGrafter"/>
</dbReference>
<dbReference type="GO" id="GO:0015031">
    <property type="term" value="P:protein transport"/>
    <property type="evidence" value="ECO:0007669"/>
    <property type="project" value="UniProtKB-KW"/>
</dbReference>
<dbReference type="CDD" id="cd20070">
    <property type="entry name" value="5TM_YidC_Alb3"/>
    <property type="match status" value="1"/>
</dbReference>
<dbReference type="CDD" id="cd19961">
    <property type="entry name" value="EcYidC-like_peri"/>
    <property type="match status" value="1"/>
</dbReference>
<dbReference type="FunFam" id="2.70.98.90:FF:000004">
    <property type="entry name" value="Membrane protein insertase YidC"/>
    <property type="match status" value="1"/>
</dbReference>
<dbReference type="Gene3D" id="2.70.98.90">
    <property type="match status" value="1"/>
</dbReference>
<dbReference type="HAMAP" id="MF_01810">
    <property type="entry name" value="YidC_type1"/>
    <property type="match status" value="1"/>
</dbReference>
<dbReference type="InterPro" id="IPR019998">
    <property type="entry name" value="Membr_insert_YidC"/>
</dbReference>
<dbReference type="InterPro" id="IPR028053">
    <property type="entry name" value="Membr_insert_YidC_N"/>
</dbReference>
<dbReference type="InterPro" id="IPR001708">
    <property type="entry name" value="YidC/ALB3/OXA1/COX18"/>
</dbReference>
<dbReference type="InterPro" id="IPR028055">
    <property type="entry name" value="YidC/Oxa/ALB_C"/>
</dbReference>
<dbReference type="InterPro" id="IPR047196">
    <property type="entry name" value="YidC_ALB_C"/>
</dbReference>
<dbReference type="InterPro" id="IPR038221">
    <property type="entry name" value="YidC_periplasmic_sf"/>
</dbReference>
<dbReference type="NCBIfam" id="NF002351">
    <property type="entry name" value="PRK01318.1-1"/>
    <property type="match status" value="1"/>
</dbReference>
<dbReference type="NCBIfam" id="NF002352">
    <property type="entry name" value="PRK01318.1-3"/>
    <property type="match status" value="1"/>
</dbReference>
<dbReference type="NCBIfam" id="TIGR03593">
    <property type="entry name" value="yidC_nterm"/>
    <property type="match status" value="1"/>
</dbReference>
<dbReference type="NCBIfam" id="TIGR03592">
    <property type="entry name" value="yidC_oxa1_cterm"/>
    <property type="match status" value="1"/>
</dbReference>
<dbReference type="PANTHER" id="PTHR12428:SF65">
    <property type="entry name" value="CYTOCHROME C OXIDASE ASSEMBLY PROTEIN COX18, MITOCHONDRIAL"/>
    <property type="match status" value="1"/>
</dbReference>
<dbReference type="PANTHER" id="PTHR12428">
    <property type="entry name" value="OXA1"/>
    <property type="match status" value="1"/>
</dbReference>
<dbReference type="Pfam" id="PF02096">
    <property type="entry name" value="60KD_IMP"/>
    <property type="match status" value="1"/>
</dbReference>
<dbReference type="Pfam" id="PF14849">
    <property type="entry name" value="YidC_periplas"/>
    <property type="match status" value="1"/>
</dbReference>
<dbReference type="PRINTS" id="PR00701">
    <property type="entry name" value="60KDINNERMP"/>
</dbReference>
<dbReference type="PRINTS" id="PR01900">
    <property type="entry name" value="YIDCPROTEIN"/>
</dbReference>
<name>YIDC_SHEB5</name>
<evidence type="ECO:0000255" key="1">
    <source>
        <dbReference type="HAMAP-Rule" id="MF_01810"/>
    </source>
</evidence>
<keyword id="KW-0997">Cell inner membrane</keyword>
<keyword id="KW-1003">Cell membrane</keyword>
<keyword id="KW-0143">Chaperone</keyword>
<keyword id="KW-0472">Membrane</keyword>
<keyword id="KW-0653">Protein transport</keyword>
<keyword id="KW-1185">Reference proteome</keyword>
<keyword id="KW-0812">Transmembrane</keyword>
<keyword id="KW-1133">Transmembrane helix</keyword>
<keyword id="KW-0813">Transport</keyword>
<protein>
    <recommendedName>
        <fullName evidence="1">Membrane protein insertase YidC</fullName>
    </recommendedName>
    <alternativeName>
        <fullName evidence="1">Foldase YidC</fullName>
    </alternativeName>
    <alternativeName>
        <fullName evidence="1">Membrane integrase YidC</fullName>
    </alternativeName>
    <alternativeName>
        <fullName evidence="1">Membrane protein YidC</fullName>
    </alternativeName>
</protein>
<sequence>MESQRNILLIGLLFVSFLLWQQWQADKAPKPVATESSLVANAANSHSADVPEADTGVPAAVTATSKLITVKTDQLDVQINPIGGDIVFAALVSHKMEQDKDQPFVLLEQTKDFTYIAQSGLIGRDGIDSSAKGRAAFSTAATEYTLAEGQDTLEVPLTYVADNGVTYTKVFVFHRGKFNVDVDYKINNTSAAPLQVQMYGQIKQTIKPSESSMVMPTYRGGAFSTQDVRYEKYKFDDMAKSNLNQATLGGWAAMLQHYFVSAWIPPATDSNTIFSSVSAGGLANIGFRGAVYDIAPGATQEISSQFYVGPKDQKALSAISDTLNLVVDYGFLWWLAVPIHWLLMFYQSFVGNWGMAIILITLTVRGLLFPLTKAQYTSMAKMRNLQPKLTDLKERFGDDRQKMGQAMMELYKKEKVNPMGGCLPIILQMPIFIALYWVLLESFELRHAPFMLWIHDLSVQDPYYILPLLMGVSMFVMQKMQPIAPTMDPMQVKMMQWMPVIFTVFFLWFPAGLVLYWLVGNIVAITQQKIIYAGLAKKGLK</sequence>
<gene>
    <name evidence="1" type="primary">yidC</name>
    <name type="ordered locus">Sbal_4380</name>
</gene>
<accession>A3DAS8</accession>
<comment type="function">
    <text evidence="1">Required for the insertion and/or proper folding and/or complex formation of integral membrane proteins into the membrane. Involved in integration of membrane proteins that insert both dependently and independently of the Sec translocase complex, as well as at least some lipoproteins. Aids folding of multispanning membrane proteins.</text>
</comment>
<comment type="subunit">
    <text evidence="1">Interacts with the Sec translocase complex via SecD. Specifically interacts with transmembrane segments of nascent integral membrane proteins during membrane integration.</text>
</comment>
<comment type="subcellular location">
    <subcellularLocation>
        <location evidence="1">Cell inner membrane</location>
        <topology evidence="1">Multi-pass membrane protein</topology>
    </subcellularLocation>
</comment>
<comment type="similarity">
    <text evidence="1">Belongs to the OXA1/ALB3/YidC family. Type 1 subfamily.</text>
</comment>
<proteinExistence type="inferred from homology"/>
<feature type="chain" id="PRO_1000070166" description="Membrane protein insertase YidC">
    <location>
        <begin position="1"/>
        <end position="541"/>
    </location>
</feature>
<feature type="transmembrane region" description="Helical" evidence="1">
    <location>
        <begin position="6"/>
        <end position="26"/>
    </location>
</feature>
<feature type="transmembrane region" description="Helical" evidence="1">
    <location>
        <begin position="325"/>
        <end position="345"/>
    </location>
</feature>
<feature type="transmembrane region" description="Helical" evidence="1">
    <location>
        <begin position="349"/>
        <end position="369"/>
    </location>
</feature>
<feature type="transmembrane region" description="Helical" evidence="1">
    <location>
        <begin position="420"/>
        <end position="440"/>
    </location>
</feature>
<feature type="transmembrane region" description="Helical" evidence="1">
    <location>
        <begin position="457"/>
        <end position="477"/>
    </location>
</feature>
<feature type="transmembrane region" description="Helical" evidence="1">
    <location>
        <begin position="500"/>
        <end position="520"/>
    </location>
</feature>
<reference key="1">
    <citation type="submission" date="2007-02" db="EMBL/GenBank/DDBJ databases">
        <title>Complete sequence of chromosome of Shewanella baltica OS155.</title>
        <authorList>
            <consortium name="US DOE Joint Genome Institute"/>
            <person name="Copeland A."/>
            <person name="Lucas S."/>
            <person name="Lapidus A."/>
            <person name="Barry K."/>
            <person name="Detter J.C."/>
            <person name="Glavina del Rio T."/>
            <person name="Hammon N."/>
            <person name="Israni S."/>
            <person name="Dalin E."/>
            <person name="Tice H."/>
            <person name="Pitluck S."/>
            <person name="Sims D.R."/>
            <person name="Brettin T."/>
            <person name="Bruce D."/>
            <person name="Han C."/>
            <person name="Tapia R."/>
            <person name="Brainard J."/>
            <person name="Schmutz J."/>
            <person name="Larimer F."/>
            <person name="Land M."/>
            <person name="Hauser L."/>
            <person name="Kyrpides N."/>
            <person name="Mikhailova N."/>
            <person name="Brettar I."/>
            <person name="Klappenbach J."/>
            <person name="Konstantinidis K."/>
            <person name="Rodrigues J."/>
            <person name="Tiedje J."/>
            <person name="Richardson P."/>
        </authorList>
    </citation>
    <scope>NUCLEOTIDE SEQUENCE [LARGE SCALE GENOMIC DNA]</scope>
    <source>
        <strain>OS155 / ATCC BAA-1091</strain>
    </source>
</reference>
<organism>
    <name type="scientific">Shewanella baltica (strain OS155 / ATCC BAA-1091)</name>
    <dbReference type="NCBI Taxonomy" id="325240"/>
    <lineage>
        <taxon>Bacteria</taxon>
        <taxon>Pseudomonadati</taxon>
        <taxon>Pseudomonadota</taxon>
        <taxon>Gammaproteobacteria</taxon>
        <taxon>Alteromonadales</taxon>
        <taxon>Shewanellaceae</taxon>
        <taxon>Shewanella</taxon>
    </lineage>
</organism>